<evidence type="ECO:0000255" key="1">
    <source>
        <dbReference type="HAMAP-Rule" id="MF_01008"/>
    </source>
</evidence>
<evidence type="ECO:0000255" key="2">
    <source>
        <dbReference type="PROSITE-ProRule" id="PRU01076"/>
    </source>
</evidence>
<reference key="1">
    <citation type="journal article" date="2006" name="PLoS Genet.">
        <title>The complete genome sequence and comparative genome analysis of the high pathogenicity Yersinia enterocolitica strain 8081.</title>
        <authorList>
            <person name="Thomson N.R."/>
            <person name="Howard S."/>
            <person name="Wren B.W."/>
            <person name="Holden M.T.G."/>
            <person name="Crossman L."/>
            <person name="Challis G.L."/>
            <person name="Churcher C."/>
            <person name="Mungall K."/>
            <person name="Brooks K."/>
            <person name="Chillingworth T."/>
            <person name="Feltwell T."/>
            <person name="Abdellah Z."/>
            <person name="Hauser H."/>
            <person name="Jagels K."/>
            <person name="Maddison M."/>
            <person name="Moule S."/>
            <person name="Sanders M."/>
            <person name="Whitehead S."/>
            <person name="Quail M.A."/>
            <person name="Dougan G."/>
            <person name="Parkhill J."/>
            <person name="Prentice M.B."/>
        </authorList>
    </citation>
    <scope>NUCLEOTIDE SEQUENCE [LARGE SCALE GENOMIC DNA]</scope>
    <source>
        <strain>NCTC 13174 / 8081</strain>
    </source>
</reference>
<name>MRAZ_YERE8</name>
<comment type="function">
    <text evidence="1">Negatively regulates its own expression and that of the subsequent genes in the proximal part of the division and cell wall (dcw) gene cluster. Acts by binding directly to DNA. May also regulate the expression of genes outside the dcw cluster.</text>
</comment>
<comment type="subunit">
    <text evidence="1">Forms oligomers.</text>
</comment>
<comment type="subcellular location">
    <subcellularLocation>
        <location evidence="1">Cytoplasm</location>
        <location evidence="1">Nucleoid</location>
    </subcellularLocation>
</comment>
<comment type="similarity">
    <text evidence="1">Belongs to the MraZ family.</text>
</comment>
<protein>
    <recommendedName>
        <fullName>Transcriptional regulator MraZ</fullName>
    </recommendedName>
</protein>
<proteinExistence type="inferred from homology"/>
<sequence length="152" mass="17416">MFRGATMVNLDSKGRLAVPTRYRDLLNEESQGQMVCTIDLHQPCLLLYTLPAWEVIEQKLSRLSSMNPAERRVQRLLLGHASECQMDGAGRLLIAGTLRQHAGLNKEVMLVGQFNKFELWDEQTWYQQVKDDIDAEQSTQEPLSERLQDLSL</sequence>
<feature type="chain" id="PRO_1000062948" description="Transcriptional regulator MraZ">
    <location>
        <begin position="1"/>
        <end position="152"/>
    </location>
</feature>
<feature type="domain" description="SpoVT-AbrB 1" evidence="2">
    <location>
        <begin position="5"/>
        <end position="52"/>
    </location>
</feature>
<feature type="domain" description="SpoVT-AbrB 2" evidence="2">
    <location>
        <begin position="81"/>
        <end position="124"/>
    </location>
</feature>
<keyword id="KW-0963">Cytoplasm</keyword>
<keyword id="KW-0238">DNA-binding</keyword>
<keyword id="KW-0677">Repeat</keyword>
<keyword id="KW-0678">Repressor</keyword>
<keyword id="KW-0804">Transcription</keyword>
<keyword id="KW-0805">Transcription regulation</keyword>
<gene>
    <name evidence="1" type="primary">mraZ</name>
    <name type="ordered locus">YE0663</name>
</gene>
<organism>
    <name type="scientific">Yersinia enterocolitica serotype O:8 / biotype 1B (strain NCTC 13174 / 8081)</name>
    <dbReference type="NCBI Taxonomy" id="393305"/>
    <lineage>
        <taxon>Bacteria</taxon>
        <taxon>Pseudomonadati</taxon>
        <taxon>Pseudomonadota</taxon>
        <taxon>Gammaproteobacteria</taxon>
        <taxon>Enterobacterales</taxon>
        <taxon>Yersiniaceae</taxon>
        <taxon>Yersinia</taxon>
    </lineage>
</organism>
<dbReference type="EMBL" id="AM286415">
    <property type="protein sequence ID" value="CAL10772.1"/>
    <property type="molecule type" value="Genomic_DNA"/>
</dbReference>
<dbReference type="RefSeq" id="WP_005167064.1">
    <property type="nucleotide sequence ID" value="NC_008800.1"/>
</dbReference>
<dbReference type="RefSeq" id="YP_001005012.1">
    <property type="nucleotide sequence ID" value="NC_008800.1"/>
</dbReference>
<dbReference type="SMR" id="A1JJI4"/>
<dbReference type="GeneID" id="82549897"/>
<dbReference type="KEGG" id="yen:YE0663"/>
<dbReference type="PATRIC" id="fig|393305.7.peg.758"/>
<dbReference type="eggNOG" id="COG2001">
    <property type="taxonomic scope" value="Bacteria"/>
</dbReference>
<dbReference type="HOGENOM" id="CLU_107907_2_0_6"/>
<dbReference type="OrthoDB" id="9807753at2"/>
<dbReference type="Proteomes" id="UP000000642">
    <property type="component" value="Chromosome"/>
</dbReference>
<dbReference type="GO" id="GO:0005737">
    <property type="term" value="C:cytoplasm"/>
    <property type="evidence" value="ECO:0007669"/>
    <property type="project" value="UniProtKB-UniRule"/>
</dbReference>
<dbReference type="GO" id="GO:0009295">
    <property type="term" value="C:nucleoid"/>
    <property type="evidence" value="ECO:0007669"/>
    <property type="project" value="UniProtKB-SubCell"/>
</dbReference>
<dbReference type="GO" id="GO:0003700">
    <property type="term" value="F:DNA-binding transcription factor activity"/>
    <property type="evidence" value="ECO:0007669"/>
    <property type="project" value="UniProtKB-UniRule"/>
</dbReference>
<dbReference type="GO" id="GO:0000976">
    <property type="term" value="F:transcription cis-regulatory region binding"/>
    <property type="evidence" value="ECO:0007669"/>
    <property type="project" value="TreeGrafter"/>
</dbReference>
<dbReference type="GO" id="GO:2000143">
    <property type="term" value="P:negative regulation of DNA-templated transcription initiation"/>
    <property type="evidence" value="ECO:0007669"/>
    <property type="project" value="TreeGrafter"/>
</dbReference>
<dbReference type="CDD" id="cd16321">
    <property type="entry name" value="MraZ_C"/>
    <property type="match status" value="1"/>
</dbReference>
<dbReference type="CDD" id="cd16320">
    <property type="entry name" value="MraZ_N"/>
    <property type="match status" value="1"/>
</dbReference>
<dbReference type="FunFam" id="3.40.1550.20:FF:000001">
    <property type="entry name" value="Transcriptional regulator MraZ"/>
    <property type="match status" value="1"/>
</dbReference>
<dbReference type="Gene3D" id="3.40.1550.20">
    <property type="entry name" value="Transcriptional regulator MraZ domain"/>
    <property type="match status" value="1"/>
</dbReference>
<dbReference type="HAMAP" id="MF_01008">
    <property type="entry name" value="MraZ"/>
    <property type="match status" value="1"/>
</dbReference>
<dbReference type="InterPro" id="IPR003444">
    <property type="entry name" value="MraZ"/>
</dbReference>
<dbReference type="InterPro" id="IPR035644">
    <property type="entry name" value="MraZ_C"/>
</dbReference>
<dbReference type="InterPro" id="IPR020603">
    <property type="entry name" value="MraZ_dom"/>
</dbReference>
<dbReference type="InterPro" id="IPR035642">
    <property type="entry name" value="MraZ_N"/>
</dbReference>
<dbReference type="InterPro" id="IPR038619">
    <property type="entry name" value="MraZ_sf"/>
</dbReference>
<dbReference type="InterPro" id="IPR007159">
    <property type="entry name" value="SpoVT-AbrB_dom"/>
</dbReference>
<dbReference type="InterPro" id="IPR037914">
    <property type="entry name" value="SpoVT-AbrB_sf"/>
</dbReference>
<dbReference type="NCBIfam" id="TIGR00242">
    <property type="entry name" value="division/cell wall cluster transcriptional repressor MraZ"/>
    <property type="match status" value="1"/>
</dbReference>
<dbReference type="PANTHER" id="PTHR34701">
    <property type="entry name" value="TRANSCRIPTIONAL REGULATOR MRAZ"/>
    <property type="match status" value="1"/>
</dbReference>
<dbReference type="PANTHER" id="PTHR34701:SF1">
    <property type="entry name" value="TRANSCRIPTIONAL REGULATOR MRAZ"/>
    <property type="match status" value="1"/>
</dbReference>
<dbReference type="Pfam" id="PF02381">
    <property type="entry name" value="MraZ"/>
    <property type="match status" value="2"/>
</dbReference>
<dbReference type="SUPFAM" id="SSF89447">
    <property type="entry name" value="AbrB/MazE/MraZ-like"/>
    <property type="match status" value="1"/>
</dbReference>
<dbReference type="PROSITE" id="PS51740">
    <property type="entry name" value="SPOVT_ABRB"/>
    <property type="match status" value="2"/>
</dbReference>
<accession>A1JJI4</accession>